<evidence type="ECO:0000255" key="1">
    <source>
        <dbReference type="HAMAP-Rule" id="MF_01208"/>
    </source>
</evidence>
<dbReference type="EC" id="2.4.2.10" evidence="1"/>
<dbReference type="EMBL" id="CP001150">
    <property type="protein sequence ID" value="ACM00101.1"/>
    <property type="molecule type" value="Genomic_DNA"/>
</dbReference>
<dbReference type="RefSeq" id="WP_012643578.1">
    <property type="nucleotide sequence ID" value="NC_011963.1"/>
</dbReference>
<dbReference type="SMR" id="B9KMA3"/>
<dbReference type="GeneID" id="67445723"/>
<dbReference type="KEGG" id="rsk:RSKD131_0241"/>
<dbReference type="HOGENOM" id="CLU_074878_1_0_5"/>
<dbReference type="UniPathway" id="UPA00070">
    <property type="reaction ID" value="UER00119"/>
</dbReference>
<dbReference type="GO" id="GO:0000287">
    <property type="term" value="F:magnesium ion binding"/>
    <property type="evidence" value="ECO:0007669"/>
    <property type="project" value="UniProtKB-UniRule"/>
</dbReference>
<dbReference type="GO" id="GO:0004588">
    <property type="term" value="F:orotate phosphoribosyltransferase activity"/>
    <property type="evidence" value="ECO:0007669"/>
    <property type="project" value="UniProtKB-UniRule"/>
</dbReference>
<dbReference type="GO" id="GO:0044205">
    <property type="term" value="P:'de novo' UMP biosynthetic process"/>
    <property type="evidence" value="ECO:0007669"/>
    <property type="project" value="UniProtKB-UniRule"/>
</dbReference>
<dbReference type="GO" id="GO:0019856">
    <property type="term" value="P:pyrimidine nucleobase biosynthetic process"/>
    <property type="evidence" value="ECO:0007669"/>
    <property type="project" value="TreeGrafter"/>
</dbReference>
<dbReference type="CDD" id="cd06223">
    <property type="entry name" value="PRTases_typeI"/>
    <property type="match status" value="1"/>
</dbReference>
<dbReference type="Gene3D" id="3.40.50.2020">
    <property type="match status" value="1"/>
</dbReference>
<dbReference type="HAMAP" id="MF_01208">
    <property type="entry name" value="PyrE"/>
    <property type="match status" value="1"/>
</dbReference>
<dbReference type="InterPro" id="IPR023031">
    <property type="entry name" value="OPRT"/>
</dbReference>
<dbReference type="InterPro" id="IPR000836">
    <property type="entry name" value="PRibTrfase_dom"/>
</dbReference>
<dbReference type="InterPro" id="IPR029057">
    <property type="entry name" value="PRTase-like"/>
</dbReference>
<dbReference type="NCBIfam" id="NF001729">
    <property type="entry name" value="PRK00455.1-3"/>
    <property type="match status" value="1"/>
</dbReference>
<dbReference type="PANTHER" id="PTHR19278">
    <property type="entry name" value="OROTATE PHOSPHORIBOSYLTRANSFERASE"/>
    <property type="match status" value="1"/>
</dbReference>
<dbReference type="PANTHER" id="PTHR19278:SF9">
    <property type="entry name" value="URIDINE 5'-MONOPHOSPHATE SYNTHASE"/>
    <property type="match status" value="1"/>
</dbReference>
<dbReference type="Pfam" id="PF00156">
    <property type="entry name" value="Pribosyltran"/>
    <property type="match status" value="1"/>
</dbReference>
<dbReference type="SUPFAM" id="SSF53271">
    <property type="entry name" value="PRTase-like"/>
    <property type="match status" value="1"/>
</dbReference>
<accession>B9KMA3</accession>
<protein>
    <recommendedName>
        <fullName evidence="1">Orotate phosphoribosyltransferase</fullName>
        <shortName evidence="1">OPRT</shortName>
        <shortName evidence="1">OPRTase</shortName>
        <ecNumber evidence="1">2.4.2.10</ecNumber>
    </recommendedName>
</protein>
<name>PYRE_CERSK</name>
<feature type="chain" id="PRO_1000164690" description="Orotate phosphoribosyltransferase">
    <location>
        <begin position="1"/>
        <end position="232"/>
    </location>
</feature>
<feature type="binding site" evidence="1">
    <location>
        <position position="107"/>
    </location>
    <ligand>
        <name>5-phospho-alpha-D-ribose 1-diphosphate</name>
        <dbReference type="ChEBI" id="CHEBI:58017"/>
        <note>ligand shared between dimeric partners</note>
    </ligand>
</feature>
<feature type="binding site" description="in other chain" evidence="1">
    <location>
        <position position="108"/>
    </location>
    <ligand>
        <name>5-phospho-alpha-D-ribose 1-diphosphate</name>
        <dbReference type="ChEBI" id="CHEBI:58017"/>
        <note>ligand shared between dimeric partners</note>
    </ligand>
</feature>
<feature type="binding site" evidence="1">
    <location>
        <position position="111"/>
    </location>
    <ligand>
        <name>5-phospho-alpha-D-ribose 1-diphosphate</name>
        <dbReference type="ChEBI" id="CHEBI:58017"/>
        <note>ligand shared between dimeric partners</note>
    </ligand>
</feature>
<feature type="binding site" description="in other chain" evidence="1">
    <location>
        <begin position="133"/>
        <end position="141"/>
    </location>
    <ligand>
        <name>5-phospho-alpha-D-ribose 1-diphosphate</name>
        <dbReference type="ChEBI" id="CHEBI:58017"/>
        <note>ligand shared between dimeric partners</note>
    </ligand>
</feature>
<feature type="binding site" evidence="1">
    <location>
        <position position="137"/>
    </location>
    <ligand>
        <name>orotate</name>
        <dbReference type="ChEBI" id="CHEBI:30839"/>
    </ligand>
</feature>
<gene>
    <name evidence="1" type="primary">pyrE</name>
    <name type="ordered locus">RSKD131_0241</name>
</gene>
<reference key="1">
    <citation type="journal article" date="2009" name="J. Bacteriol.">
        <title>Complete genome sequence of Rhodobacter sphaeroides KD131.</title>
        <authorList>
            <person name="Lim S.-K."/>
            <person name="Kim S.J."/>
            <person name="Cha S.H."/>
            <person name="Oh Y.-K."/>
            <person name="Rhee H.-J."/>
            <person name="Kim M.-S."/>
            <person name="Lee J.K."/>
        </authorList>
    </citation>
    <scope>NUCLEOTIDE SEQUENCE [LARGE SCALE GENOMIC DNA]</scope>
    <source>
        <strain>KD131 / KCTC 12085</strain>
    </source>
</reference>
<proteinExistence type="inferred from homology"/>
<keyword id="KW-0328">Glycosyltransferase</keyword>
<keyword id="KW-0460">Magnesium</keyword>
<keyword id="KW-0665">Pyrimidine biosynthesis</keyword>
<keyword id="KW-0808">Transferase</keyword>
<sequence>MIPTSFPPREEIARLTARMLLEIEAVHFRPQEPFTLASGLPSPTYIDCRKLISYPRIRSTLMDFMAVTLLRDAGFEAFDNIAGGETAGIPFAALVAERLGLPMTYVRKKPKGYGRNARIEGVMTEGQRVLLVEDLTTDGGSKLSFVDAIRETGASCAHTAVIFYYGIFPETIGRLQAHGVTLHPLCTWWDVLAEARASGAFDAATLAEVESFLSNPRDWQDARKPADPTKSL</sequence>
<comment type="function">
    <text evidence="1">Catalyzes the transfer of a ribosyl phosphate group from 5-phosphoribose 1-diphosphate to orotate, leading to the formation of orotidine monophosphate (OMP).</text>
</comment>
<comment type="catalytic activity">
    <reaction evidence="1">
        <text>orotidine 5'-phosphate + diphosphate = orotate + 5-phospho-alpha-D-ribose 1-diphosphate</text>
        <dbReference type="Rhea" id="RHEA:10380"/>
        <dbReference type="ChEBI" id="CHEBI:30839"/>
        <dbReference type="ChEBI" id="CHEBI:33019"/>
        <dbReference type="ChEBI" id="CHEBI:57538"/>
        <dbReference type="ChEBI" id="CHEBI:58017"/>
        <dbReference type="EC" id="2.4.2.10"/>
    </reaction>
</comment>
<comment type="cofactor">
    <cofactor evidence="1">
        <name>Mg(2+)</name>
        <dbReference type="ChEBI" id="CHEBI:18420"/>
    </cofactor>
</comment>
<comment type="pathway">
    <text evidence="1">Pyrimidine metabolism; UMP biosynthesis via de novo pathway; UMP from orotate: step 1/2.</text>
</comment>
<comment type="subunit">
    <text evidence="1">Homodimer.</text>
</comment>
<comment type="similarity">
    <text evidence="1">Belongs to the purine/pyrimidine phosphoribosyltransferase family. PyrE subfamily.</text>
</comment>
<organism>
    <name type="scientific">Cereibacter sphaeroides (strain KD131 / KCTC 12085)</name>
    <name type="common">Rhodobacter sphaeroides</name>
    <dbReference type="NCBI Taxonomy" id="557760"/>
    <lineage>
        <taxon>Bacteria</taxon>
        <taxon>Pseudomonadati</taxon>
        <taxon>Pseudomonadota</taxon>
        <taxon>Alphaproteobacteria</taxon>
        <taxon>Rhodobacterales</taxon>
        <taxon>Paracoccaceae</taxon>
        <taxon>Cereibacter</taxon>
    </lineage>
</organism>